<name>UBX1_YEAST</name>
<protein>
    <recommendedName>
        <fullName>UBX domain-containing protein 1</fullName>
    </recommendedName>
    <alternativeName>
        <fullName>Suppressor of high-copy PP1 protein</fullName>
    </alternativeName>
</protein>
<organism>
    <name type="scientific">Saccharomyces cerevisiae (strain ATCC 204508 / S288c)</name>
    <name type="common">Baker's yeast</name>
    <dbReference type="NCBI Taxonomy" id="559292"/>
    <lineage>
        <taxon>Eukaryota</taxon>
        <taxon>Fungi</taxon>
        <taxon>Dikarya</taxon>
        <taxon>Ascomycota</taxon>
        <taxon>Saccharomycotina</taxon>
        <taxon>Saccharomycetes</taxon>
        <taxon>Saccharomycetales</taxon>
        <taxon>Saccharomycetaceae</taxon>
        <taxon>Saccharomyces</taxon>
    </lineage>
</organism>
<gene>
    <name type="primary">SHP1</name>
    <name type="synonym">UBX1</name>
    <name type="ordered locus">YBL058W</name>
    <name type="ORF">YBL0509</name>
    <name type="ORF">YBL0515</name>
</gene>
<reference key="1">
    <citation type="journal article" date="1993" name="Yeast">
        <title>Sequencing and functional analysis of a 32,560 bp segment on the left arm of yeast chromosome II. Identification of 26 open reading frames, including the KIP1 and SEC17 genes.</title>
        <authorList>
            <person name="Scherens B."/>
            <person name="el Bakkoury M."/>
            <person name="Vierendeels F."/>
            <person name="Dubois E."/>
            <person name="Messenguy F."/>
        </authorList>
    </citation>
    <scope>NUCLEOTIDE SEQUENCE [GENOMIC DNA]</scope>
    <source>
        <strain>ATCC 204508 / S288c</strain>
    </source>
</reference>
<reference key="2">
    <citation type="journal article" date="1994" name="EMBO J.">
        <title>Complete DNA sequence of yeast chromosome II.</title>
        <authorList>
            <person name="Feldmann H."/>
            <person name="Aigle M."/>
            <person name="Aljinovic G."/>
            <person name="Andre B."/>
            <person name="Baclet M.C."/>
            <person name="Barthe C."/>
            <person name="Baur A."/>
            <person name="Becam A.-M."/>
            <person name="Biteau N."/>
            <person name="Boles E."/>
            <person name="Brandt T."/>
            <person name="Brendel M."/>
            <person name="Brueckner M."/>
            <person name="Bussereau F."/>
            <person name="Christiansen C."/>
            <person name="Contreras R."/>
            <person name="Crouzet M."/>
            <person name="Cziepluch C."/>
            <person name="Demolis N."/>
            <person name="Delaveau T."/>
            <person name="Doignon F."/>
            <person name="Domdey H."/>
            <person name="Duesterhus S."/>
            <person name="Dubois E."/>
            <person name="Dujon B."/>
            <person name="El Bakkoury M."/>
            <person name="Entian K.-D."/>
            <person name="Feuermann M."/>
            <person name="Fiers W."/>
            <person name="Fobo G.M."/>
            <person name="Fritz C."/>
            <person name="Gassenhuber J."/>
            <person name="Glansdorff N."/>
            <person name="Goffeau A."/>
            <person name="Grivell L.A."/>
            <person name="de Haan M."/>
            <person name="Hein C."/>
            <person name="Herbert C.J."/>
            <person name="Hollenberg C.P."/>
            <person name="Holmstroem K."/>
            <person name="Jacq C."/>
            <person name="Jacquet M."/>
            <person name="Jauniaux J.-C."/>
            <person name="Jonniaux J.-L."/>
            <person name="Kallesoee T."/>
            <person name="Kiesau P."/>
            <person name="Kirchrath L."/>
            <person name="Koetter P."/>
            <person name="Korol S."/>
            <person name="Liebl S."/>
            <person name="Logghe M."/>
            <person name="Lohan A.J.E."/>
            <person name="Louis E.J."/>
            <person name="Li Z.Y."/>
            <person name="Maat M.J."/>
            <person name="Mallet L."/>
            <person name="Mannhaupt G."/>
            <person name="Messenguy F."/>
            <person name="Miosga T."/>
            <person name="Molemans F."/>
            <person name="Mueller S."/>
            <person name="Nasr F."/>
            <person name="Obermaier B."/>
            <person name="Perea J."/>
            <person name="Pierard A."/>
            <person name="Piravandi E."/>
            <person name="Pohl F.M."/>
            <person name="Pohl T.M."/>
            <person name="Potier S."/>
            <person name="Proft M."/>
            <person name="Purnelle B."/>
            <person name="Ramezani Rad M."/>
            <person name="Rieger M."/>
            <person name="Rose M."/>
            <person name="Schaaff-Gerstenschlaeger I."/>
            <person name="Scherens B."/>
            <person name="Schwarzlose C."/>
            <person name="Skala J."/>
            <person name="Slonimski P.P."/>
            <person name="Smits P.H.M."/>
            <person name="Souciet J.-L."/>
            <person name="Steensma H.Y."/>
            <person name="Stucka R."/>
            <person name="Urrestarazu L.A."/>
            <person name="van der Aart Q.J.M."/>
            <person name="Van Dyck L."/>
            <person name="Vassarotti A."/>
            <person name="Vetter I."/>
            <person name="Vierendeels F."/>
            <person name="Vissers S."/>
            <person name="Wagner G."/>
            <person name="de Wergifosse P."/>
            <person name="Wolfe K.H."/>
            <person name="Zagulski M."/>
            <person name="Zimmermann F.K."/>
            <person name="Mewes H.-W."/>
            <person name="Kleine K."/>
        </authorList>
    </citation>
    <scope>NUCLEOTIDE SEQUENCE [LARGE SCALE GENOMIC DNA]</scope>
    <source>
        <strain>ATCC 204508 / S288c</strain>
    </source>
</reference>
<reference key="3">
    <citation type="journal article" date="2014" name="G3 (Bethesda)">
        <title>The reference genome sequence of Saccharomyces cerevisiae: Then and now.</title>
        <authorList>
            <person name="Engel S.R."/>
            <person name="Dietrich F.S."/>
            <person name="Fisk D.G."/>
            <person name="Binkley G."/>
            <person name="Balakrishnan R."/>
            <person name="Costanzo M.C."/>
            <person name="Dwight S.S."/>
            <person name="Hitz B.C."/>
            <person name="Karra K."/>
            <person name="Nash R.S."/>
            <person name="Weng S."/>
            <person name="Wong E.D."/>
            <person name="Lloyd P."/>
            <person name="Skrzypek M.S."/>
            <person name="Miyasato S.R."/>
            <person name="Simison M."/>
            <person name="Cherry J.M."/>
        </authorList>
    </citation>
    <scope>GENOME REANNOTATION</scope>
    <source>
        <strain>ATCC 204508 / S288c</strain>
    </source>
</reference>
<reference key="4">
    <citation type="journal article" date="2007" name="Genome Res.">
        <title>Approaching a complete repository of sequence-verified protein-encoding clones for Saccharomyces cerevisiae.</title>
        <authorList>
            <person name="Hu Y."/>
            <person name="Rolfs A."/>
            <person name="Bhullar B."/>
            <person name="Murthy T.V.S."/>
            <person name="Zhu C."/>
            <person name="Berger M.F."/>
            <person name="Camargo A.A."/>
            <person name="Kelley F."/>
            <person name="McCarron S."/>
            <person name="Jepson D."/>
            <person name="Richardson A."/>
            <person name="Raphael J."/>
            <person name="Moreira D."/>
            <person name="Taycher E."/>
            <person name="Zuo D."/>
            <person name="Mohr S."/>
            <person name="Kane M.F."/>
            <person name="Williamson J."/>
            <person name="Simpson A.J.G."/>
            <person name="Bulyk M.L."/>
            <person name="Harlow E."/>
            <person name="Marsischky G."/>
            <person name="Kolodner R.D."/>
            <person name="LaBaer J."/>
        </authorList>
    </citation>
    <scope>NUCLEOTIDE SEQUENCE [GENOMIC DNA]</scope>
    <source>
        <strain>ATCC 204508 / S288c</strain>
    </source>
</reference>
<reference key="5">
    <citation type="journal article" date="1995" name="Mol. Cell. Biol.">
        <title>The Saccharomyces SHP1 gene, which encodes a regulator of phosphoprotein phosphatase 1 with differential effects on glycogen metabolism, meiotic differentiation, and mitotic cell cycle progression.</title>
        <authorList>
            <person name="Zhang S."/>
            <person name="Guha S."/>
            <person name="Volkert F.C."/>
        </authorList>
    </citation>
    <scope>IDENTIFICATION</scope>
</reference>
<reference key="6">
    <citation type="journal article" date="2003" name="Nature">
        <title>Global analysis of protein localization in budding yeast.</title>
        <authorList>
            <person name="Huh W.-K."/>
            <person name="Falvo J.V."/>
            <person name="Gerke L.C."/>
            <person name="Carroll A.S."/>
            <person name="Howson R.W."/>
            <person name="Weissman J.S."/>
            <person name="O'Shea E.K."/>
        </authorList>
    </citation>
    <scope>SUBCELLULAR LOCATION [LARGE SCALE ANALYSIS]</scope>
</reference>
<reference key="7">
    <citation type="journal article" date="2003" name="Nature">
        <title>Global analysis of protein expression in yeast.</title>
        <authorList>
            <person name="Ghaemmaghami S."/>
            <person name="Huh W.-K."/>
            <person name="Bower K."/>
            <person name="Howson R.W."/>
            <person name="Belle A."/>
            <person name="Dephoure N."/>
            <person name="O'Shea E.K."/>
            <person name="Weissman J.S."/>
        </authorList>
    </citation>
    <scope>LEVEL OF PROTEIN EXPRESSION [LARGE SCALE ANALYSIS]</scope>
</reference>
<reference key="8">
    <citation type="journal article" date="2004" name="EMBO Rep.">
        <title>Shp1 and Ubx2 are adaptors of Cdc48 involved in ubiquitin-dependent protein degradation.</title>
        <authorList>
            <person name="Schuberth C."/>
            <person name="Richly H."/>
            <person name="Rumpf S."/>
            <person name="Buchberger A."/>
        </authorList>
    </citation>
    <scope>FUNCTION</scope>
    <scope>INTERACTION WITH CDC48</scope>
</reference>
<reference key="9">
    <citation type="journal article" date="2005" name="Mol. Cell. Proteomics">
        <title>Quantitative phosphoproteomics applied to the yeast pheromone signaling pathway.</title>
        <authorList>
            <person name="Gruhler A."/>
            <person name="Olsen J.V."/>
            <person name="Mohammed S."/>
            <person name="Mortensen P."/>
            <person name="Faergeman N.J."/>
            <person name="Mann M."/>
            <person name="Jensen O.N."/>
        </authorList>
    </citation>
    <scope>PHOSPHORYLATION [LARGE SCALE ANALYSIS] AT SER-315</scope>
    <scope>IDENTIFICATION BY MASS SPECTROMETRY [LARGE SCALE ANALYSIS]</scope>
    <source>
        <strain>YAL6B</strain>
    </source>
</reference>
<reference key="10">
    <citation type="journal article" date="2006" name="Mol. Cell">
        <title>Functional division of substrate processing cofactors of the ubiquitin-selective Cdc48 chaperone.</title>
        <authorList>
            <person name="Rumpf S."/>
            <person name="Jentsch S."/>
        </authorList>
    </citation>
    <scope>IDENTIFICATION IN A COMPLEX WITH NPL4; UFD1; CDC48; OTU1 AND DOA1</scope>
</reference>
<reference key="11">
    <citation type="journal article" date="2007" name="J. Proteome Res.">
        <title>Large-scale phosphorylation analysis of alpha-factor-arrested Saccharomyces cerevisiae.</title>
        <authorList>
            <person name="Li X."/>
            <person name="Gerber S.A."/>
            <person name="Rudner A.D."/>
            <person name="Beausoleil S.A."/>
            <person name="Haas W."/>
            <person name="Villen J."/>
            <person name="Elias J.E."/>
            <person name="Gygi S.P."/>
        </authorList>
    </citation>
    <scope>PHOSPHORYLATION [LARGE SCALE ANALYSIS] AT SER-315 AND SER-322</scope>
    <scope>IDENTIFICATION BY MASS SPECTROMETRY [LARGE SCALE ANALYSIS]</scope>
    <source>
        <strain>ADR376</strain>
    </source>
</reference>
<reference key="12">
    <citation type="journal article" date="2008" name="Mol. Cell. Proteomics">
        <title>A multidimensional chromatography technology for in-depth phosphoproteome analysis.</title>
        <authorList>
            <person name="Albuquerque C.P."/>
            <person name="Smolka M.B."/>
            <person name="Payne S.H."/>
            <person name="Bafna V."/>
            <person name="Eng J."/>
            <person name="Zhou H."/>
        </authorList>
    </citation>
    <scope>PHOSPHORYLATION [LARGE SCALE ANALYSIS] AT SER-315</scope>
    <scope>IDENTIFICATION BY MASS SPECTROMETRY [LARGE SCALE ANALYSIS]</scope>
</reference>
<reference key="13">
    <citation type="journal article" date="2009" name="Science">
        <title>Global analysis of Cdk1 substrate phosphorylation sites provides insights into evolution.</title>
        <authorList>
            <person name="Holt L.J."/>
            <person name="Tuch B.B."/>
            <person name="Villen J."/>
            <person name="Johnson A.D."/>
            <person name="Gygi S.P."/>
            <person name="Morgan D.O."/>
        </authorList>
    </citation>
    <scope>PHOSPHORYLATION [LARGE SCALE ANALYSIS] AT SER-128; SER-210; SER-224; SER-315; SER-321; SER-322 AND THR-331</scope>
    <scope>IDENTIFICATION BY MASS SPECTROMETRY [LARGE SCALE ANALYSIS]</scope>
</reference>
<reference key="14">
    <citation type="journal article" date="2012" name="Proteomics">
        <title>Sites of ubiquitin attachment in Saccharomyces cerevisiae.</title>
        <authorList>
            <person name="Starita L.M."/>
            <person name="Lo R.S."/>
            <person name="Eng J.K."/>
            <person name="von Haller P.D."/>
            <person name="Fields S."/>
        </authorList>
    </citation>
    <scope>UBIQUITINATION [LARGE SCALE ANALYSIS] AT LYS-241</scope>
    <scope>IDENTIFICATION BY MASS SPECTROMETRY [LARGE SCALE ANALYSIS]</scope>
</reference>
<sequence>MAEIPDETIQQFMALTNVSHNIAVQYLSEFGDLNEALNSYYASQTDDQKDRREEAHWNRQQEKALKQEAFSTNSSNKAINTEHVGGLCPKPGSSQGSNEYLKRKGSTSPEPTKGSSRSGSGNNSRFMSFSDMVRGQADDDDEDQPRNTFAGGETSGLEVTDPSDPNSLLKDLLEKARRGGQMGAENGFRDDEDHEMGANRFTGRGFRLGSTIDAADEVVEDNTSQSQRRPEKVTREITFWKEGFQVADGPLYRYDDPANSFYLSELNQGRAPLKLLDVQFGQEVEVNVYKKLDESYKAPTRKLGGFSGQGQRLGSPIPGESSPAEVPKNETPAAQEQPMPDNEPKQGDTSIQIRYANGKREVLHCNSTDTVKFLYEHVTSNANTDPSRNFTLNYAFPIKPISNDETTLKDADLLNSVVVQRWA</sequence>
<comment type="function">
    <text evidence="6">Involved in CDC48-dependent protein degradation through the ubiquitin/proteasome pathway. Direct or indirect positive regulator of GLC7 activity.</text>
</comment>
<comment type="subunit">
    <text evidence="6 7">Forms a complex composed of CDC48, NPL4, UFD1, DOA1, SHP1 and deubiquitinase OTU1 (PubMed:16427015). Interacts with CDC48 (PubMed:15258615).</text>
</comment>
<comment type="interaction">
    <interactant intactId="EBI-17093">
        <id>P34223</id>
    </interactant>
    <interactant intactId="EBI-4308">
        <id>P25694</id>
        <label>CDC48</label>
    </interactant>
    <organismsDiffer>false</organismsDiffer>
    <experiments>11</experiments>
</comment>
<comment type="interaction">
    <interactant intactId="EBI-17093">
        <id>P34223</id>
    </interactant>
    <interactant intactId="EBI-33192">
        <id>Q12743</id>
        <label>DFM1</label>
    </interactant>
    <organismsDiffer>false</organismsDiffer>
    <experiments>2</experiments>
</comment>
<comment type="interaction">
    <interactant intactId="EBI-17093">
        <id>P34223</id>
    </interactant>
    <interactant intactId="EBI-20003">
        <id>P54860</id>
        <label>UFD2</label>
    </interactant>
    <organismsDiffer>false</organismsDiffer>
    <experiments>3</experiments>
</comment>
<comment type="subcellular location">
    <subcellularLocation>
        <location evidence="4">Nucleus</location>
    </subcellularLocation>
    <subcellularLocation>
        <location evidence="4">Cytoplasm</location>
    </subcellularLocation>
</comment>
<comment type="miscellaneous">
    <text evidence="5">Present with 3200 molecules/cell in log phase SD medium.</text>
</comment>
<accession>P34223</accession>
<accession>D6VPU2</accession>
<accession>E9P8S9</accession>
<keyword id="KW-0002">3D-structure</keyword>
<keyword id="KW-0963">Cytoplasm</keyword>
<keyword id="KW-1017">Isopeptide bond</keyword>
<keyword id="KW-0539">Nucleus</keyword>
<keyword id="KW-0597">Phosphoprotein</keyword>
<keyword id="KW-1185">Reference proteome</keyword>
<keyword id="KW-0832">Ubl conjugation</keyword>
<keyword id="KW-0833">Ubl conjugation pathway</keyword>
<proteinExistence type="evidence at protein level"/>
<dbReference type="EMBL" id="Z23261">
    <property type="protein sequence ID" value="CAA80789.1"/>
    <property type="molecule type" value="Genomic_DNA"/>
</dbReference>
<dbReference type="EMBL" id="Z35819">
    <property type="protein sequence ID" value="CAA84878.1"/>
    <property type="molecule type" value="Genomic_DNA"/>
</dbReference>
<dbReference type="EMBL" id="AY557717">
    <property type="protein sequence ID" value="AAS56043.1"/>
    <property type="molecule type" value="Genomic_DNA"/>
</dbReference>
<dbReference type="EMBL" id="BK006936">
    <property type="protein sequence ID" value="DAA07062.1"/>
    <property type="molecule type" value="Genomic_DNA"/>
</dbReference>
<dbReference type="PIR" id="S39830">
    <property type="entry name" value="S39830"/>
</dbReference>
<dbReference type="RefSeq" id="NP_009495.1">
    <property type="nucleotide sequence ID" value="NM_001178298.1"/>
</dbReference>
<dbReference type="PDB" id="6OPC">
    <property type="method" value="EM"/>
    <property type="resolution" value="3.70 A"/>
    <property type="chains" value="Z=1-423"/>
</dbReference>
<dbReference type="PDB" id="8UB4">
    <property type="method" value="EM"/>
    <property type="resolution" value="2.90 A"/>
    <property type="chains" value="H/I/J=1-423"/>
</dbReference>
<dbReference type="PDBsum" id="6OPC"/>
<dbReference type="PDBsum" id="8UB4"/>
<dbReference type="EMDB" id="EMD-20149"/>
<dbReference type="EMDB" id="EMD-42076"/>
<dbReference type="SMR" id="P34223"/>
<dbReference type="BioGRID" id="32641">
    <property type="interactions" value="462"/>
</dbReference>
<dbReference type="ComplexPortal" id="CPX-8127">
    <property type="entry name" value="CDC48-SHP1 AAA ATPase complex"/>
</dbReference>
<dbReference type="DIP" id="DIP-2789N"/>
<dbReference type="FunCoup" id="P34223">
    <property type="interactions" value="1284"/>
</dbReference>
<dbReference type="IntAct" id="P34223">
    <property type="interactions" value="27"/>
</dbReference>
<dbReference type="MINT" id="P34223"/>
<dbReference type="STRING" id="4932.YBL058W"/>
<dbReference type="iPTMnet" id="P34223"/>
<dbReference type="PaxDb" id="4932-YBL058W"/>
<dbReference type="PeptideAtlas" id="P34223"/>
<dbReference type="TopDownProteomics" id="P34223"/>
<dbReference type="EnsemblFungi" id="YBL058W_mRNA">
    <property type="protein sequence ID" value="YBL058W"/>
    <property type="gene ID" value="YBL058W"/>
</dbReference>
<dbReference type="GeneID" id="852222"/>
<dbReference type="KEGG" id="sce:YBL058W"/>
<dbReference type="AGR" id="SGD:S000000154"/>
<dbReference type="SGD" id="S000000154">
    <property type="gene designation" value="SHP1"/>
</dbReference>
<dbReference type="VEuPathDB" id="FungiDB:YBL058W"/>
<dbReference type="eggNOG" id="KOG2086">
    <property type="taxonomic scope" value="Eukaryota"/>
</dbReference>
<dbReference type="GeneTree" id="ENSGT00520000055567"/>
<dbReference type="HOGENOM" id="CLU_029402_4_1_1"/>
<dbReference type="InParanoid" id="P34223"/>
<dbReference type="OMA" id="REVLHCN"/>
<dbReference type="OrthoDB" id="25887at2759"/>
<dbReference type="BioCyc" id="YEAST:G3O-28956-MONOMER"/>
<dbReference type="BioGRID-ORCS" id="852222">
    <property type="hits" value="10 hits in 10 CRISPR screens"/>
</dbReference>
<dbReference type="PRO" id="PR:P34223"/>
<dbReference type="Proteomes" id="UP000002311">
    <property type="component" value="Chromosome II"/>
</dbReference>
<dbReference type="RNAct" id="P34223">
    <property type="molecule type" value="protein"/>
</dbReference>
<dbReference type="GO" id="GO:0005737">
    <property type="term" value="C:cytoplasm"/>
    <property type="evidence" value="ECO:0007005"/>
    <property type="project" value="SGD"/>
</dbReference>
<dbReference type="GO" id="GO:0005829">
    <property type="term" value="C:cytosol"/>
    <property type="evidence" value="ECO:0007005"/>
    <property type="project" value="SGD"/>
</dbReference>
<dbReference type="GO" id="GO:0005634">
    <property type="term" value="C:nucleus"/>
    <property type="evidence" value="ECO:0007005"/>
    <property type="project" value="SGD"/>
</dbReference>
<dbReference type="GO" id="GO:0036435">
    <property type="term" value="F:K48-linked polyubiquitin modification-dependent protein binding"/>
    <property type="evidence" value="ECO:0000314"/>
    <property type="project" value="SGD"/>
</dbReference>
<dbReference type="GO" id="GO:0019888">
    <property type="term" value="F:protein phosphatase regulator activity"/>
    <property type="evidence" value="ECO:0000315"/>
    <property type="project" value="SGD"/>
</dbReference>
<dbReference type="GO" id="GO:0043130">
    <property type="term" value="F:ubiquitin binding"/>
    <property type="evidence" value="ECO:0000318"/>
    <property type="project" value="GO_Central"/>
</dbReference>
<dbReference type="GO" id="GO:0030437">
    <property type="term" value="P:ascospore formation"/>
    <property type="evidence" value="ECO:0000315"/>
    <property type="project" value="SGD"/>
</dbReference>
<dbReference type="GO" id="GO:0000045">
    <property type="term" value="P:autophagosome assembly"/>
    <property type="evidence" value="ECO:0000315"/>
    <property type="project" value="SGD"/>
</dbReference>
<dbReference type="GO" id="GO:0036503">
    <property type="term" value="P:ERAD pathway"/>
    <property type="evidence" value="ECO:0000315"/>
    <property type="project" value="SGD"/>
</dbReference>
<dbReference type="GO" id="GO:0005977">
    <property type="term" value="P:glycogen metabolic process"/>
    <property type="evidence" value="ECO:0000315"/>
    <property type="project" value="SGD"/>
</dbReference>
<dbReference type="GO" id="GO:0007030">
    <property type="term" value="P:Golgi organization"/>
    <property type="evidence" value="ECO:0000318"/>
    <property type="project" value="GO_Central"/>
</dbReference>
<dbReference type="GO" id="GO:0061025">
    <property type="term" value="P:membrane fusion"/>
    <property type="evidence" value="ECO:0000318"/>
    <property type="project" value="GO_Central"/>
</dbReference>
<dbReference type="GO" id="GO:0031468">
    <property type="term" value="P:nuclear membrane reassembly"/>
    <property type="evidence" value="ECO:0000318"/>
    <property type="project" value="GO_Central"/>
</dbReference>
<dbReference type="GO" id="GO:0034727">
    <property type="term" value="P:piecemeal microautophagy of the nucleus"/>
    <property type="evidence" value="ECO:0000315"/>
    <property type="project" value="SGD"/>
</dbReference>
<dbReference type="GO" id="GO:0043161">
    <property type="term" value="P:proteasome-mediated ubiquitin-dependent protein catabolic process"/>
    <property type="evidence" value="ECO:0000315"/>
    <property type="project" value="SGD"/>
</dbReference>
<dbReference type="GO" id="GO:0031134">
    <property type="term" value="P:sister chromatid biorientation"/>
    <property type="evidence" value="ECO:0000315"/>
    <property type="project" value="SGD"/>
</dbReference>
<dbReference type="CDD" id="cd14351">
    <property type="entry name" value="UBA_Ubx1_like"/>
    <property type="match status" value="1"/>
</dbReference>
<dbReference type="CDD" id="cd01770">
    <property type="entry name" value="UBX_UBXN2"/>
    <property type="match status" value="1"/>
</dbReference>
<dbReference type="FunFam" id="1.10.8.10:FF:000096">
    <property type="entry name" value="UBX domain-containing protein"/>
    <property type="match status" value="1"/>
</dbReference>
<dbReference type="FunFam" id="3.10.20.90:FF:000311">
    <property type="entry name" value="UBX domain-containing protein 1"/>
    <property type="match status" value="1"/>
</dbReference>
<dbReference type="FunFam" id="3.30.420.210:FF:000002">
    <property type="entry name" value="UBX domain-containing protein 1"/>
    <property type="match status" value="1"/>
</dbReference>
<dbReference type="Gene3D" id="1.10.8.10">
    <property type="entry name" value="DNA helicase RuvA subunit, C-terminal domain"/>
    <property type="match status" value="1"/>
</dbReference>
<dbReference type="Gene3D" id="3.10.20.90">
    <property type="entry name" value="Phosphatidylinositol 3-kinase Catalytic Subunit, Chain A, domain 1"/>
    <property type="match status" value="1"/>
</dbReference>
<dbReference type="Gene3D" id="3.30.420.210">
    <property type="entry name" value="SEP domain"/>
    <property type="match status" value="1"/>
</dbReference>
<dbReference type="InterPro" id="IPR036241">
    <property type="entry name" value="NSFL1C_SEP_dom_sf"/>
</dbReference>
<dbReference type="InterPro" id="IPR012989">
    <property type="entry name" value="SEP_domain"/>
</dbReference>
<dbReference type="InterPro" id="IPR029071">
    <property type="entry name" value="Ubiquitin-like_domsf"/>
</dbReference>
<dbReference type="InterPro" id="IPR001012">
    <property type="entry name" value="UBX_dom"/>
</dbReference>
<dbReference type="PANTHER" id="PTHR23333:SF20">
    <property type="entry name" value="NSFL1 COFACTOR P47"/>
    <property type="match status" value="1"/>
</dbReference>
<dbReference type="PANTHER" id="PTHR23333">
    <property type="entry name" value="UBX DOMAIN CONTAINING PROTEIN"/>
    <property type="match status" value="1"/>
</dbReference>
<dbReference type="Pfam" id="PF08059">
    <property type="entry name" value="SEP"/>
    <property type="match status" value="1"/>
</dbReference>
<dbReference type="Pfam" id="PF14555">
    <property type="entry name" value="UBA_4"/>
    <property type="match status" value="1"/>
</dbReference>
<dbReference type="Pfam" id="PF00789">
    <property type="entry name" value="UBX"/>
    <property type="match status" value="1"/>
</dbReference>
<dbReference type="SMART" id="SM00553">
    <property type="entry name" value="SEP"/>
    <property type="match status" value="1"/>
</dbReference>
<dbReference type="SMART" id="SM00166">
    <property type="entry name" value="UBX"/>
    <property type="match status" value="1"/>
</dbReference>
<dbReference type="SUPFAM" id="SSF102848">
    <property type="entry name" value="NSFL1 (p97 ATPase) cofactor p47, SEP domain"/>
    <property type="match status" value="1"/>
</dbReference>
<dbReference type="SUPFAM" id="SSF54236">
    <property type="entry name" value="Ubiquitin-like"/>
    <property type="match status" value="1"/>
</dbReference>
<dbReference type="PROSITE" id="PS51399">
    <property type="entry name" value="SEP"/>
    <property type="match status" value="1"/>
</dbReference>
<dbReference type="PROSITE" id="PS50033">
    <property type="entry name" value="UBX"/>
    <property type="match status" value="1"/>
</dbReference>
<feature type="chain" id="PRO_0000210998" description="UBX domain-containing protein 1">
    <location>
        <begin position="1"/>
        <end position="423"/>
    </location>
</feature>
<feature type="domain" description="SEP" evidence="2">
    <location>
        <begin position="232"/>
        <end position="297"/>
    </location>
</feature>
<feature type="domain" description="UBX" evidence="1">
    <location>
        <begin position="344"/>
        <end position="421"/>
    </location>
</feature>
<feature type="region of interest" description="Disordered" evidence="3">
    <location>
        <begin position="44"/>
        <end position="167"/>
    </location>
</feature>
<feature type="region of interest" description="Disordered" evidence="3">
    <location>
        <begin position="299"/>
        <end position="348"/>
    </location>
</feature>
<feature type="compositionally biased region" description="Basic and acidic residues" evidence="3">
    <location>
        <begin position="46"/>
        <end position="66"/>
    </location>
</feature>
<feature type="compositionally biased region" description="Polar residues" evidence="3">
    <location>
        <begin position="69"/>
        <end position="79"/>
    </location>
</feature>
<feature type="compositionally biased region" description="Low complexity" evidence="3">
    <location>
        <begin position="115"/>
        <end position="130"/>
    </location>
</feature>
<feature type="modified residue" description="Phosphoserine" evidence="12">
    <location>
        <position position="128"/>
    </location>
</feature>
<feature type="modified residue" description="Phosphoserine" evidence="12">
    <location>
        <position position="210"/>
    </location>
</feature>
<feature type="modified residue" description="Phosphoserine" evidence="12">
    <location>
        <position position="224"/>
    </location>
</feature>
<feature type="modified residue" description="Phosphoserine" evidence="9 10 11 12">
    <location>
        <position position="315"/>
    </location>
</feature>
<feature type="modified residue" description="Phosphoserine" evidence="12">
    <location>
        <position position="321"/>
    </location>
</feature>
<feature type="modified residue" description="Phosphoserine" evidence="10 12">
    <location>
        <position position="322"/>
    </location>
</feature>
<feature type="modified residue" description="Phosphothreonine" evidence="12">
    <location>
        <position position="331"/>
    </location>
</feature>
<feature type="cross-link" description="Glycyl lysine isopeptide (Lys-Gly) (interchain with G-Cter in ubiquitin)" evidence="13">
    <location>
        <position position="241"/>
    </location>
</feature>
<feature type="sequence conflict" description="In Ref. 4; AAS56043." evidence="8" ref="4">
    <original>T</original>
    <variation>A</variation>
    <location>
        <position position="223"/>
    </location>
</feature>
<evidence type="ECO:0000255" key="1">
    <source>
        <dbReference type="PROSITE-ProRule" id="PRU00215"/>
    </source>
</evidence>
<evidence type="ECO:0000255" key="2">
    <source>
        <dbReference type="PROSITE-ProRule" id="PRU00732"/>
    </source>
</evidence>
<evidence type="ECO:0000256" key="3">
    <source>
        <dbReference type="SAM" id="MobiDB-lite"/>
    </source>
</evidence>
<evidence type="ECO:0000269" key="4">
    <source>
    </source>
</evidence>
<evidence type="ECO:0000269" key="5">
    <source>
    </source>
</evidence>
<evidence type="ECO:0000269" key="6">
    <source>
    </source>
</evidence>
<evidence type="ECO:0000269" key="7">
    <source>
    </source>
</evidence>
<evidence type="ECO:0000305" key="8"/>
<evidence type="ECO:0007744" key="9">
    <source>
    </source>
</evidence>
<evidence type="ECO:0007744" key="10">
    <source>
    </source>
</evidence>
<evidence type="ECO:0007744" key="11">
    <source>
    </source>
</evidence>
<evidence type="ECO:0007744" key="12">
    <source>
    </source>
</evidence>
<evidence type="ECO:0007744" key="13">
    <source>
    </source>
</evidence>